<keyword id="KW-0963">Cytoplasm</keyword>
<keyword id="KW-0520">NAD</keyword>
<keyword id="KW-0560">Oxidoreductase</keyword>
<keyword id="KW-0597">Phosphoprotein</keyword>
<keyword id="KW-0346">Stress response</keyword>
<name>LDH1_STAAM</name>
<proteinExistence type="inferred from homology"/>
<protein>
    <recommendedName>
        <fullName evidence="2">L-lactate dehydrogenase 1</fullName>
        <shortName evidence="2">L-LDH 1</shortName>
        <ecNumber evidence="2">1.1.1.27</ecNumber>
    </recommendedName>
</protein>
<evidence type="ECO:0000250" key="1">
    <source>
        <dbReference type="UniProtKB" id="Q5HJD7"/>
    </source>
</evidence>
<evidence type="ECO:0000255" key="2">
    <source>
        <dbReference type="HAMAP-Rule" id="MF_00488"/>
    </source>
</evidence>
<evidence type="ECO:0000305" key="3"/>
<gene>
    <name evidence="2" type="primary">ldh1</name>
    <name type="synonym">lctE</name>
    <name type="synonym">ldhA</name>
    <name type="ordered locus">SAV0241</name>
</gene>
<sequence length="317" mass="34569">MNKFKGNKVVLIGNGAVGSSYAFSLVNQSIVDELVIIDLDTEKVRGDVMDLKHATPYSPTTVRVKAGEYSDCHDADLVVICAGAAQKPGETRLDLVSKNLKIFKSIVGEVMASKFDGIFLVATNPVDILAYATWKFSGLPKERVIGSGTILDSARFRLLLSEAFDVAPRSVDAQIIGEHGDTELPVWSHANIAGQPLKTLLEQRPEGKAQIEQIFVQTRDAAYDIIQAKGATYYGVAMGLARITEAIFRNEDAVLTVSALLEGEYDEEDVYIGVPAVINRNGIRNVVEIPLNDEEQSKFAHSAKTLKDIMAEAEELK</sequence>
<reference key="1">
    <citation type="journal article" date="2001" name="Lancet">
        <title>Whole genome sequencing of meticillin-resistant Staphylococcus aureus.</title>
        <authorList>
            <person name="Kuroda M."/>
            <person name="Ohta T."/>
            <person name="Uchiyama I."/>
            <person name="Baba T."/>
            <person name="Yuzawa H."/>
            <person name="Kobayashi I."/>
            <person name="Cui L."/>
            <person name="Oguchi A."/>
            <person name="Aoki K."/>
            <person name="Nagai Y."/>
            <person name="Lian J.-Q."/>
            <person name="Ito T."/>
            <person name="Kanamori M."/>
            <person name="Matsumaru H."/>
            <person name="Maruyama A."/>
            <person name="Murakami H."/>
            <person name="Hosoyama A."/>
            <person name="Mizutani-Ui Y."/>
            <person name="Takahashi N.K."/>
            <person name="Sawano T."/>
            <person name="Inoue R."/>
            <person name="Kaito C."/>
            <person name="Sekimizu K."/>
            <person name="Hirakawa H."/>
            <person name="Kuhara S."/>
            <person name="Goto S."/>
            <person name="Yabuzaki J."/>
            <person name="Kanehisa M."/>
            <person name="Yamashita A."/>
            <person name="Oshima K."/>
            <person name="Furuya K."/>
            <person name="Yoshino C."/>
            <person name="Shiba T."/>
            <person name="Hattori M."/>
            <person name="Ogasawara N."/>
            <person name="Hayashi H."/>
            <person name="Hiramatsu K."/>
        </authorList>
    </citation>
    <scope>NUCLEOTIDE SEQUENCE [LARGE SCALE GENOMIC DNA]</scope>
    <source>
        <strain>Mu50 / ATCC 700699</strain>
    </source>
</reference>
<organism>
    <name type="scientific">Staphylococcus aureus (strain Mu50 / ATCC 700699)</name>
    <dbReference type="NCBI Taxonomy" id="158878"/>
    <lineage>
        <taxon>Bacteria</taxon>
        <taxon>Bacillati</taxon>
        <taxon>Bacillota</taxon>
        <taxon>Bacilli</taxon>
        <taxon>Bacillales</taxon>
        <taxon>Staphylococcaceae</taxon>
        <taxon>Staphylococcus</taxon>
    </lineage>
</organism>
<feature type="chain" id="PRO_0000168381" description="L-lactate dehydrogenase 1">
    <location>
        <begin position="1"/>
        <end position="317"/>
    </location>
</feature>
<feature type="active site" description="Proton acceptor" evidence="2">
    <location>
        <position position="179"/>
    </location>
</feature>
<feature type="binding site" evidence="2">
    <location>
        <position position="17"/>
    </location>
    <ligand>
        <name>NAD(+)</name>
        <dbReference type="ChEBI" id="CHEBI:57540"/>
    </ligand>
</feature>
<feature type="binding site" evidence="2">
    <location>
        <position position="38"/>
    </location>
    <ligand>
        <name>NAD(+)</name>
        <dbReference type="ChEBI" id="CHEBI:57540"/>
    </ligand>
</feature>
<feature type="binding site" evidence="2">
    <location>
        <position position="43"/>
    </location>
    <ligand>
        <name>NAD(+)</name>
        <dbReference type="ChEBI" id="CHEBI:57540"/>
    </ligand>
</feature>
<feature type="binding site" evidence="2">
    <location>
        <position position="69"/>
    </location>
    <ligand>
        <name>NAD(+)</name>
        <dbReference type="ChEBI" id="CHEBI:57540"/>
    </ligand>
</feature>
<feature type="binding site" evidence="2">
    <location>
        <begin position="83"/>
        <end position="84"/>
    </location>
    <ligand>
        <name>NAD(+)</name>
        <dbReference type="ChEBI" id="CHEBI:57540"/>
    </ligand>
</feature>
<feature type="binding site" evidence="2">
    <location>
        <position position="86"/>
    </location>
    <ligand>
        <name>substrate</name>
    </ligand>
</feature>
<feature type="binding site" evidence="2">
    <location>
        <position position="92"/>
    </location>
    <ligand>
        <name>substrate</name>
    </ligand>
</feature>
<feature type="binding site" evidence="2">
    <location>
        <position position="105"/>
    </location>
    <ligand>
        <name>NAD(+)</name>
        <dbReference type="ChEBI" id="CHEBI:57540"/>
    </ligand>
</feature>
<feature type="binding site" evidence="2">
    <location>
        <begin position="122"/>
        <end position="124"/>
    </location>
    <ligand>
        <name>NAD(+)</name>
        <dbReference type="ChEBI" id="CHEBI:57540"/>
    </ligand>
</feature>
<feature type="binding site" evidence="2">
    <location>
        <begin position="124"/>
        <end position="127"/>
    </location>
    <ligand>
        <name>substrate</name>
    </ligand>
</feature>
<feature type="binding site" evidence="2">
    <location>
        <position position="147"/>
    </location>
    <ligand>
        <name>NAD(+)</name>
        <dbReference type="ChEBI" id="CHEBI:57540"/>
    </ligand>
</feature>
<feature type="binding site" evidence="2">
    <location>
        <begin position="152"/>
        <end position="155"/>
    </location>
    <ligand>
        <name>substrate</name>
    </ligand>
</feature>
<feature type="binding site" evidence="2">
    <location>
        <position position="232"/>
    </location>
    <ligand>
        <name>substrate</name>
    </ligand>
</feature>
<feature type="modified residue" description="Phosphotyrosine" evidence="2">
    <location>
        <position position="223"/>
    </location>
</feature>
<comment type="function">
    <text evidence="1 2">Catalyzes the conversion of lactate to pyruvate (Potential). Appears to be the primary factor that allows S.aureus growth during nitrosative stress in both aerobically and anaerobically cultured cells (By similarity).</text>
</comment>
<comment type="catalytic activity">
    <reaction evidence="2">
        <text>(S)-lactate + NAD(+) = pyruvate + NADH + H(+)</text>
        <dbReference type="Rhea" id="RHEA:23444"/>
        <dbReference type="ChEBI" id="CHEBI:15361"/>
        <dbReference type="ChEBI" id="CHEBI:15378"/>
        <dbReference type="ChEBI" id="CHEBI:16651"/>
        <dbReference type="ChEBI" id="CHEBI:57540"/>
        <dbReference type="ChEBI" id="CHEBI:57945"/>
        <dbReference type="EC" id="1.1.1.27"/>
    </reaction>
</comment>
<comment type="pathway">
    <text evidence="2">Fermentation; pyruvate fermentation to lactate; (S)-lactate from pyruvate: step 1/1.</text>
</comment>
<comment type="subunit">
    <text evidence="2">Homotetramer.</text>
</comment>
<comment type="subcellular location">
    <subcellularLocation>
        <location evidence="2">Cytoplasm</location>
    </subcellularLocation>
</comment>
<comment type="similarity">
    <text evidence="2 3">Belongs to the LDH/MDH superfamily. LDH family.</text>
</comment>
<dbReference type="EC" id="1.1.1.27" evidence="2"/>
<dbReference type="EMBL" id="BA000017">
    <property type="protein sequence ID" value="BAB56403.1"/>
    <property type="molecule type" value="Genomic_DNA"/>
</dbReference>
<dbReference type="RefSeq" id="WP_001031880.1">
    <property type="nucleotide sequence ID" value="NC_002758.2"/>
</dbReference>
<dbReference type="SMR" id="P65255"/>
<dbReference type="KEGG" id="sav:SAV0241"/>
<dbReference type="HOGENOM" id="CLU_045401_1_1_9"/>
<dbReference type="PhylomeDB" id="P65255"/>
<dbReference type="UniPathway" id="UPA00554">
    <property type="reaction ID" value="UER00611"/>
</dbReference>
<dbReference type="Proteomes" id="UP000002481">
    <property type="component" value="Chromosome"/>
</dbReference>
<dbReference type="GO" id="GO:0005737">
    <property type="term" value="C:cytoplasm"/>
    <property type="evidence" value="ECO:0007669"/>
    <property type="project" value="UniProtKB-SubCell"/>
</dbReference>
<dbReference type="GO" id="GO:0004459">
    <property type="term" value="F:L-lactate dehydrogenase activity"/>
    <property type="evidence" value="ECO:0007669"/>
    <property type="project" value="UniProtKB-UniRule"/>
</dbReference>
<dbReference type="GO" id="GO:0006096">
    <property type="term" value="P:glycolytic process"/>
    <property type="evidence" value="ECO:0007669"/>
    <property type="project" value="UniProtKB-UniRule"/>
</dbReference>
<dbReference type="GO" id="GO:0006089">
    <property type="term" value="P:lactate metabolic process"/>
    <property type="evidence" value="ECO:0007669"/>
    <property type="project" value="TreeGrafter"/>
</dbReference>
<dbReference type="CDD" id="cd05291">
    <property type="entry name" value="HicDH_like"/>
    <property type="match status" value="1"/>
</dbReference>
<dbReference type="FunFam" id="3.40.50.720:FF:000018">
    <property type="entry name" value="Malate dehydrogenase"/>
    <property type="match status" value="1"/>
</dbReference>
<dbReference type="Gene3D" id="3.90.110.10">
    <property type="entry name" value="Lactate dehydrogenase/glycoside hydrolase, family 4, C-terminal"/>
    <property type="match status" value="1"/>
</dbReference>
<dbReference type="Gene3D" id="3.40.50.720">
    <property type="entry name" value="NAD(P)-binding Rossmann-like Domain"/>
    <property type="match status" value="1"/>
</dbReference>
<dbReference type="HAMAP" id="MF_00488">
    <property type="entry name" value="Lactate_dehydrog"/>
    <property type="match status" value="1"/>
</dbReference>
<dbReference type="InterPro" id="IPR001557">
    <property type="entry name" value="L-lactate/malate_DH"/>
</dbReference>
<dbReference type="InterPro" id="IPR011304">
    <property type="entry name" value="L-lactate_DH"/>
</dbReference>
<dbReference type="InterPro" id="IPR018177">
    <property type="entry name" value="L-lactate_DH_AS"/>
</dbReference>
<dbReference type="InterPro" id="IPR022383">
    <property type="entry name" value="Lactate/malate_DH_C"/>
</dbReference>
<dbReference type="InterPro" id="IPR001236">
    <property type="entry name" value="Lactate/malate_DH_N"/>
</dbReference>
<dbReference type="InterPro" id="IPR015955">
    <property type="entry name" value="Lactate_DH/Glyco_Ohase_4_C"/>
</dbReference>
<dbReference type="InterPro" id="IPR036291">
    <property type="entry name" value="NAD(P)-bd_dom_sf"/>
</dbReference>
<dbReference type="NCBIfam" id="TIGR01771">
    <property type="entry name" value="L-LDH-NAD"/>
    <property type="match status" value="1"/>
</dbReference>
<dbReference type="NCBIfam" id="NF000824">
    <property type="entry name" value="PRK00066.1"/>
    <property type="match status" value="1"/>
</dbReference>
<dbReference type="NCBIfam" id="NF004863">
    <property type="entry name" value="PRK06223.1"/>
    <property type="match status" value="1"/>
</dbReference>
<dbReference type="PANTHER" id="PTHR43128">
    <property type="entry name" value="L-2-HYDROXYCARBOXYLATE DEHYDROGENASE (NAD(P)(+))"/>
    <property type="match status" value="1"/>
</dbReference>
<dbReference type="PANTHER" id="PTHR43128:SF16">
    <property type="entry name" value="L-LACTATE DEHYDROGENASE"/>
    <property type="match status" value="1"/>
</dbReference>
<dbReference type="Pfam" id="PF02866">
    <property type="entry name" value="Ldh_1_C"/>
    <property type="match status" value="1"/>
</dbReference>
<dbReference type="Pfam" id="PF00056">
    <property type="entry name" value="Ldh_1_N"/>
    <property type="match status" value="1"/>
</dbReference>
<dbReference type="PIRSF" id="PIRSF000102">
    <property type="entry name" value="Lac_mal_DH"/>
    <property type="match status" value="1"/>
</dbReference>
<dbReference type="PRINTS" id="PR00086">
    <property type="entry name" value="LLDHDRGNASE"/>
</dbReference>
<dbReference type="SUPFAM" id="SSF56327">
    <property type="entry name" value="LDH C-terminal domain-like"/>
    <property type="match status" value="1"/>
</dbReference>
<dbReference type="SUPFAM" id="SSF51735">
    <property type="entry name" value="NAD(P)-binding Rossmann-fold domains"/>
    <property type="match status" value="1"/>
</dbReference>
<dbReference type="PROSITE" id="PS00064">
    <property type="entry name" value="L_LDH"/>
    <property type="match status" value="1"/>
</dbReference>
<accession>P65255</accession>
<accession>Q99WY2</accession>